<accession>Q6G9W7</accession>
<comment type="function">
    <text evidence="1">Succinyl-CoA synthetase functions in the citric acid cycle (TCA), coupling the hydrolysis of succinyl-CoA to the synthesis of either ATP or GTP and thus represents the only step of substrate-level phosphorylation in the TCA. The alpha subunit of the enzyme binds the substrates coenzyme A and phosphate, while succinate binding and nucleotide specificity is provided by the beta subunit.</text>
</comment>
<comment type="catalytic activity">
    <reaction evidence="1">
        <text>succinate + ATP + CoA = succinyl-CoA + ADP + phosphate</text>
        <dbReference type="Rhea" id="RHEA:17661"/>
        <dbReference type="ChEBI" id="CHEBI:30031"/>
        <dbReference type="ChEBI" id="CHEBI:30616"/>
        <dbReference type="ChEBI" id="CHEBI:43474"/>
        <dbReference type="ChEBI" id="CHEBI:57287"/>
        <dbReference type="ChEBI" id="CHEBI:57292"/>
        <dbReference type="ChEBI" id="CHEBI:456216"/>
        <dbReference type="EC" id="6.2.1.5"/>
    </reaction>
    <physiologicalReaction direction="right-to-left" evidence="1">
        <dbReference type="Rhea" id="RHEA:17663"/>
    </physiologicalReaction>
</comment>
<comment type="catalytic activity">
    <reaction evidence="1">
        <text>GTP + succinate + CoA = succinyl-CoA + GDP + phosphate</text>
        <dbReference type="Rhea" id="RHEA:22120"/>
        <dbReference type="ChEBI" id="CHEBI:30031"/>
        <dbReference type="ChEBI" id="CHEBI:37565"/>
        <dbReference type="ChEBI" id="CHEBI:43474"/>
        <dbReference type="ChEBI" id="CHEBI:57287"/>
        <dbReference type="ChEBI" id="CHEBI:57292"/>
        <dbReference type="ChEBI" id="CHEBI:58189"/>
    </reaction>
    <physiologicalReaction direction="right-to-left" evidence="1">
        <dbReference type="Rhea" id="RHEA:22122"/>
    </physiologicalReaction>
</comment>
<comment type="pathway">
    <text evidence="1">Carbohydrate metabolism; tricarboxylic acid cycle; succinate from succinyl-CoA (ligase route): step 1/1.</text>
</comment>
<comment type="subunit">
    <text evidence="1">Heterotetramer of two alpha and two beta subunits.</text>
</comment>
<comment type="similarity">
    <text evidence="1">Belongs to the succinate/malate CoA ligase alpha subunit family.</text>
</comment>
<name>SUCD_STAAS</name>
<proteinExistence type="inferred from homology"/>
<organism>
    <name type="scientific">Staphylococcus aureus (strain MSSA476)</name>
    <dbReference type="NCBI Taxonomy" id="282459"/>
    <lineage>
        <taxon>Bacteria</taxon>
        <taxon>Bacillati</taxon>
        <taxon>Bacillota</taxon>
        <taxon>Bacilli</taxon>
        <taxon>Bacillales</taxon>
        <taxon>Staphylococcaceae</taxon>
        <taxon>Staphylococcus</taxon>
    </lineage>
</organism>
<gene>
    <name evidence="1" type="primary">sucD</name>
    <name type="ordered locus">SAS1180</name>
</gene>
<reference key="1">
    <citation type="journal article" date="2004" name="Proc. Natl. Acad. Sci. U.S.A.">
        <title>Complete genomes of two clinical Staphylococcus aureus strains: evidence for the rapid evolution of virulence and drug resistance.</title>
        <authorList>
            <person name="Holden M.T.G."/>
            <person name="Feil E.J."/>
            <person name="Lindsay J.A."/>
            <person name="Peacock S.J."/>
            <person name="Day N.P.J."/>
            <person name="Enright M.C."/>
            <person name="Foster T.J."/>
            <person name="Moore C.E."/>
            <person name="Hurst L."/>
            <person name="Atkin R."/>
            <person name="Barron A."/>
            <person name="Bason N."/>
            <person name="Bentley S.D."/>
            <person name="Chillingworth C."/>
            <person name="Chillingworth T."/>
            <person name="Churcher C."/>
            <person name="Clark L."/>
            <person name="Corton C."/>
            <person name="Cronin A."/>
            <person name="Doggett J."/>
            <person name="Dowd L."/>
            <person name="Feltwell T."/>
            <person name="Hance Z."/>
            <person name="Harris B."/>
            <person name="Hauser H."/>
            <person name="Holroyd S."/>
            <person name="Jagels K."/>
            <person name="James K.D."/>
            <person name="Lennard N."/>
            <person name="Line A."/>
            <person name="Mayes R."/>
            <person name="Moule S."/>
            <person name="Mungall K."/>
            <person name="Ormond D."/>
            <person name="Quail M.A."/>
            <person name="Rabbinowitsch E."/>
            <person name="Rutherford K.M."/>
            <person name="Sanders M."/>
            <person name="Sharp S."/>
            <person name="Simmonds M."/>
            <person name="Stevens K."/>
            <person name="Whitehead S."/>
            <person name="Barrell B.G."/>
            <person name="Spratt B.G."/>
            <person name="Parkhill J."/>
        </authorList>
    </citation>
    <scope>NUCLEOTIDE SEQUENCE [LARGE SCALE GENOMIC DNA]</scope>
    <source>
        <strain>MSSA476</strain>
    </source>
</reference>
<dbReference type="EC" id="6.2.1.5" evidence="1"/>
<dbReference type="EMBL" id="BX571857">
    <property type="protein sequence ID" value="CAG42957.1"/>
    <property type="molecule type" value="Genomic_DNA"/>
</dbReference>
<dbReference type="RefSeq" id="WP_000110251.1">
    <property type="nucleotide sequence ID" value="NC_002953.3"/>
</dbReference>
<dbReference type="SMR" id="Q6G9W7"/>
<dbReference type="KEGG" id="sas:SAS1180"/>
<dbReference type="HOGENOM" id="CLU_052104_0_0_9"/>
<dbReference type="UniPathway" id="UPA00223">
    <property type="reaction ID" value="UER00999"/>
</dbReference>
<dbReference type="GO" id="GO:0005829">
    <property type="term" value="C:cytosol"/>
    <property type="evidence" value="ECO:0007669"/>
    <property type="project" value="TreeGrafter"/>
</dbReference>
<dbReference type="GO" id="GO:0009361">
    <property type="term" value="C:succinate-CoA ligase complex (ADP-forming)"/>
    <property type="evidence" value="ECO:0007669"/>
    <property type="project" value="TreeGrafter"/>
</dbReference>
<dbReference type="GO" id="GO:0000166">
    <property type="term" value="F:nucleotide binding"/>
    <property type="evidence" value="ECO:0007669"/>
    <property type="project" value="UniProtKB-KW"/>
</dbReference>
<dbReference type="GO" id="GO:0004775">
    <property type="term" value="F:succinate-CoA ligase (ADP-forming) activity"/>
    <property type="evidence" value="ECO:0007669"/>
    <property type="project" value="UniProtKB-UniRule"/>
</dbReference>
<dbReference type="GO" id="GO:0004776">
    <property type="term" value="F:succinate-CoA ligase (GDP-forming) activity"/>
    <property type="evidence" value="ECO:0007669"/>
    <property type="project" value="RHEA"/>
</dbReference>
<dbReference type="GO" id="GO:0006099">
    <property type="term" value="P:tricarboxylic acid cycle"/>
    <property type="evidence" value="ECO:0007669"/>
    <property type="project" value="UniProtKB-UniRule"/>
</dbReference>
<dbReference type="FunFam" id="3.40.50.261:FF:000002">
    <property type="entry name" value="Succinate--CoA ligase [ADP-forming] subunit alpha"/>
    <property type="match status" value="1"/>
</dbReference>
<dbReference type="FunFam" id="3.40.50.720:FF:000002">
    <property type="entry name" value="Succinate--CoA ligase [ADP-forming] subunit alpha"/>
    <property type="match status" value="1"/>
</dbReference>
<dbReference type="Gene3D" id="3.40.50.720">
    <property type="entry name" value="NAD(P)-binding Rossmann-like Domain"/>
    <property type="match status" value="1"/>
</dbReference>
<dbReference type="Gene3D" id="3.40.50.261">
    <property type="entry name" value="Succinyl-CoA synthetase domains"/>
    <property type="match status" value="1"/>
</dbReference>
<dbReference type="HAMAP" id="MF_01988">
    <property type="entry name" value="Succ_CoA_alpha"/>
    <property type="match status" value="1"/>
</dbReference>
<dbReference type="InterPro" id="IPR017440">
    <property type="entry name" value="Cit_synth/succinyl-CoA_lig_AS"/>
</dbReference>
<dbReference type="InterPro" id="IPR033847">
    <property type="entry name" value="Citrt_syn/SCS-alpha_CS"/>
</dbReference>
<dbReference type="InterPro" id="IPR003781">
    <property type="entry name" value="CoA-bd"/>
</dbReference>
<dbReference type="InterPro" id="IPR005810">
    <property type="entry name" value="CoA_lig_alpha"/>
</dbReference>
<dbReference type="InterPro" id="IPR036291">
    <property type="entry name" value="NAD(P)-bd_dom_sf"/>
</dbReference>
<dbReference type="InterPro" id="IPR005811">
    <property type="entry name" value="SUCC_ACL_C"/>
</dbReference>
<dbReference type="InterPro" id="IPR016102">
    <property type="entry name" value="Succinyl-CoA_synth-like"/>
</dbReference>
<dbReference type="NCBIfam" id="NF004230">
    <property type="entry name" value="PRK05678.1"/>
    <property type="match status" value="1"/>
</dbReference>
<dbReference type="NCBIfam" id="TIGR01019">
    <property type="entry name" value="sucCoAalpha"/>
    <property type="match status" value="1"/>
</dbReference>
<dbReference type="PANTHER" id="PTHR11117:SF2">
    <property type="entry name" value="SUCCINATE--COA LIGASE [ADP_GDP-FORMING] SUBUNIT ALPHA, MITOCHONDRIAL"/>
    <property type="match status" value="1"/>
</dbReference>
<dbReference type="PANTHER" id="PTHR11117">
    <property type="entry name" value="SUCCINYL-COA LIGASE SUBUNIT ALPHA"/>
    <property type="match status" value="1"/>
</dbReference>
<dbReference type="Pfam" id="PF02629">
    <property type="entry name" value="CoA_binding"/>
    <property type="match status" value="1"/>
</dbReference>
<dbReference type="Pfam" id="PF00549">
    <property type="entry name" value="Ligase_CoA"/>
    <property type="match status" value="1"/>
</dbReference>
<dbReference type="PIRSF" id="PIRSF001553">
    <property type="entry name" value="SucCS_alpha"/>
    <property type="match status" value="1"/>
</dbReference>
<dbReference type="PRINTS" id="PR01798">
    <property type="entry name" value="SCOASYNTHASE"/>
</dbReference>
<dbReference type="SMART" id="SM00881">
    <property type="entry name" value="CoA_binding"/>
    <property type="match status" value="1"/>
</dbReference>
<dbReference type="SUPFAM" id="SSF51735">
    <property type="entry name" value="NAD(P)-binding Rossmann-fold domains"/>
    <property type="match status" value="1"/>
</dbReference>
<dbReference type="SUPFAM" id="SSF52210">
    <property type="entry name" value="Succinyl-CoA synthetase domains"/>
    <property type="match status" value="1"/>
</dbReference>
<dbReference type="PROSITE" id="PS01216">
    <property type="entry name" value="SUCCINYL_COA_LIG_1"/>
    <property type="match status" value="1"/>
</dbReference>
<dbReference type="PROSITE" id="PS00399">
    <property type="entry name" value="SUCCINYL_COA_LIG_2"/>
    <property type="match status" value="1"/>
</dbReference>
<feature type="chain" id="PRO_0000102803" description="Succinate--CoA ligase [ADP-forming] subunit alpha">
    <location>
        <begin position="1"/>
        <end position="302"/>
    </location>
</feature>
<feature type="active site" description="Tele-phosphohistidine intermediate" evidence="1">
    <location>
        <position position="247"/>
    </location>
</feature>
<feature type="binding site" evidence="1">
    <location>
        <begin position="17"/>
        <end position="20"/>
    </location>
    <ligand>
        <name>CoA</name>
        <dbReference type="ChEBI" id="CHEBI:57287"/>
    </ligand>
</feature>
<feature type="binding site" evidence="1">
    <location>
        <position position="43"/>
    </location>
    <ligand>
        <name>CoA</name>
        <dbReference type="ChEBI" id="CHEBI:57287"/>
    </ligand>
</feature>
<feature type="binding site" evidence="1">
    <location>
        <begin position="96"/>
        <end position="98"/>
    </location>
    <ligand>
        <name>CoA</name>
        <dbReference type="ChEBI" id="CHEBI:57287"/>
    </ligand>
</feature>
<feature type="binding site" evidence="1">
    <location>
        <position position="159"/>
    </location>
    <ligand>
        <name>substrate</name>
        <note>ligand shared with subunit beta</note>
    </ligand>
</feature>
<evidence type="ECO:0000255" key="1">
    <source>
        <dbReference type="HAMAP-Rule" id="MF_01988"/>
    </source>
</evidence>
<protein>
    <recommendedName>
        <fullName evidence="1">Succinate--CoA ligase [ADP-forming] subunit alpha</fullName>
        <ecNumber evidence="1">6.2.1.5</ecNumber>
    </recommendedName>
    <alternativeName>
        <fullName evidence="1">Succinyl-CoA synthetase subunit alpha</fullName>
        <shortName evidence="1">SCS-alpha</shortName>
    </alternativeName>
</protein>
<sequence length="302" mass="31526">MSVFIDKNTKVMVQGITGSTALFHTKQMLDYGTKIVAGVTPGKGGQVVEGVPVFNTVEEAKNETGATVSVIYVPAPFAADSILEAADADLDMVICITEHIPVLDMVKVKRYLQGRKTRLVGPNCPGVITADECKIGIMPGYIHKKGHVGVVSRSGTLTYEAVHQLTEEGIGQTTAVGIGGDPVNGTNFIDVLKAFNEDDETKAVVMIGEIGGTAEEEAAEWIKANMTKPVVGFIGGQTAPPGKRMGHAGAIISGGKGTAEEKIKTLNSCGVKTAATPSEIGSTLIEAAKEAGIYEALLTVNK</sequence>
<keyword id="KW-0436">Ligase</keyword>
<keyword id="KW-0547">Nucleotide-binding</keyword>
<keyword id="KW-0816">Tricarboxylic acid cycle</keyword>